<protein>
    <recommendedName>
        <fullName>Phosphoinositide 3-kinase regulatory subunit 5</fullName>
        <shortName>PI3-kinase regulatory subunit 5</shortName>
    </recommendedName>
    <alternativeName>
        <fullName>PI3-kinase p101 subunit</fullName>
    </alternativeName>
    <alternativeName>
        <fullName>Phosphatidylinositol 4,5-bisphosphate 3-kinase regulatory subunit</fullName>
        <shortName>PtdIns-3-kinase regulatory subunit</shortName>
    </alternativeName>
    <alternativeName>
        <fullName>PtdIns-3-kinase p101</fullName>
    </alternativeName>
    <alternativeName>
        <fullName>p101-PI3K</fullName>
    </alternativeName>
</protein>
<dbReference type="EMBL" id="AY156924">
    <property type="protein sequence ID" value="AAN84787.1"/>
    <property type="molecule type" value="mRNA"/>
</dbReference>
<dbReference type="EMBL" id="AK089483">
    <property type="protein sequence ID" value="BAC40901.2"/>
    <property type="molecule type" value="mRNA"/>
</dbReference>
<dbReference type="EMBL" id="AK149847">
    <property type="protein sequence ID" value="BAE29119.1"/>
    <property type="molecule type" value="mRNA"/>
</dbReference>
<dbReference type="EMBL" id="AK161050">
    <property type="protein sequence ID" value="BAE36171.1"/>
    <property type="molecule type" value="mRNA"/>
</dbReference>
<dbReference type="EMBL" id="AL606831">
    <property type="status" value="NOT_ANNOTATED_CDS"/>
    <property type="molecule type" value="Genomic_DNA"/>
</dbReference>
<dbReference type="CCDS" id="CCDS24865.1"/>
<dbReference type="RefSeq" id="NP_796294.2">
    <property type="nucleotide sequence ID" value="NM_177320.2"/>
</dbReference>
<dbReference type="RefSeq" id="XP_006533611.1">
    <property type="nucleotide sequence ID" value="XM_006533548.3"/>
</dbReference>
<dbReference type="SMR" id="Q5SW28"/>
<dbReference type="CORUM" id="Q5SW28"/>
<dbReference type="FunCoup" id="Q5SW28">
    <property type="interactions" value="754"/>
</dbReference>
<dbReference type="IntAct" id="Q5SW28">
    <property type="interactions" value="2"/>
</dbReference>
<dbReference type="STRING" id="10090.ENSMUSP00000021283"/>
<dbReference type="iPTMnet" id="Q5SW28"/>
<dbReference type="PhosphoSitePlus" id="Q5SW28"/>
<dbReference type="jPOST" id="Q5SW28"/>
<dbReference type="PaxDb" id="10090-ENSMUSP00000021283"/>
<dbReference type="ProteomicsDB" id="289417"/>
<dbReference type="Antibodypedia" id="24754">
    <property type="antibodies" value="452 antibodies from 31 providers"/>
</dbReference>
<dbReference type="DNASU" id="320207"/>
<dbReference type="Ensembl" id="ENSMUST00000021283.8">
    <property type="protein sequence ID" value="ENSMUSP00000021283.8"/>
    <property type="gene ID" value="ENSMUSG00000020901.14"/>
</dbReference>
<dbReference type="GeneID" id="320207"/>
<dbReference type="KEGG" id="mmu:320207"/>
<dbReference type="UCSC" id="uc007jno.1">
    <property type="organism name" value="mouse"/>
</dbReference>
<dbReference type="AGR" id="MGI:2443588"/>
<dbReference type="CTD" id="23533"/>
<dbReference type="MGI" id="MGI:2443588">
    <property type="gene designation" value="Pik3r5"/>
</dbReference>
<dbReference type="VEuPathDB" id="HostDB:ENSMUSG00000020901"/>
<dbReference type="eggNOG" id="ENOG502QV4A">
    <property type="taxonomic scope" value="Eukaryota"/>
</dbReference>
<dbReference type="GeneTree" id="ENSGT00530000063753"/>
<dbReference type="HOGENOM" id="CLU_337590_0_0_1"/>
<dbReference type="InParanoid" id="Q5SW28"/>
<dbReference type="OMA" id="VLCQHSL"/>
<dbReference type="OrthoDB" id="9932678at2759"/>
<dbReference type="PhylomeDB" id="Q5SW28"/>
<dbReference type="TreeFam" id="TF102035"/>
<dbReference type="Reactome" id="R-MMU-114604">
    <property type="pathway name" value="GPVI-mediated activation cascade"/>
</dbReference>
<dbReference type="Reactome" id="R-MMU-1257604">
    <property type="pathway name" value="PIP3 activates AKT signaling"/>
</dbReference>
<dbReference type="Reactome" id="R-MMU-1660499">
    <property type="pathway name" value="Synthesis of PIPs at the plasma membrane"/>
</dbReference>
<dbReference type="Reactome" id="R-MMU-389357">
    <property type="pathway name" value="CD28 dependent PI3K/Akt signaling"/>
</dbReference>
<dbReference type="Reactome" id="R-MMU-392451">
    <property type="pathway name" value="G beta:gamma signalling through PI3Kgamma"/>
</dbReference>
<dbReference type="Reactome" id="R-MMU-6811558">
    <property type="pathway name" value="PI5P, PP2A and IER3 Regulate PI3K/AKT Signaling"/>
</dbReference>
<dbReference type="Reactome" id="R-MMU-9027276">
    <property type="pathway name" value="Erythropoietin activates Phosphoinositide-3-kinase (PI3K)"/>
</dbReference>
<dbReference type="Reactome" id="R-MMU-9927354">
    <property type="pathway name" value="Co-stimulation by ICOS"/>
</dbReference>
<dbReference type="BioGRID-ORCS" id="320207">
    <property type="hits" value="7 hits in 78 CRISPR screens"/>
</dbReference>
<dbReference type="ChiTaRS" id="Pik3r5">
    <property type="organism name" value="mouse"/>
</dbReference>
<dbReference type="PRO" id="PR:Q5SW28"/>
<dbReference type="Proteomes" id="UP000000589">
    <property type="component" value="Chromosome 11"/>
</dbReference>
<dbReference type="RNAct" id="Q5SW28">
    <property type="molecule type" value="protein"/>
</dbReference>
<dbReference type="Bgee" id="ENSMUSG00000020901">
    <property type="expression patterns" value="Expressed in granulocyte and 80 other cell types or tissues"/>
</dbReference>
<dbReference type="ExpressionAtlas" id="Q5SW28">
    <property type="expression patterns" value="baseline and differential"/>
</dbReference>
<dbReference type="GO" id="GO:0034451">
    <property type="term" value="C:centriolar satellite"/>
    <property type="evidence" value="ECO:0007669"/>
    <property type="project" value="Ensembl"/>
</dbReference>
<dbReference type="GO" id="GO:0005737">
    <property type="term" value="C:cytoplasm"/>
    <property type="evidence" value="ECO:0000250"/>
    <property type="project" value="UniProtKB"/>
</dbReference>
<dbReference type="GO" id="GO:0005829">
    <property type="term" value="C:cytosol"/>
    <property type="evidence" value="ECO:0000304"/>
    <property type="project" value="Reactome"/>
</dbReference>
<dbReference type="GO" id="GO:0016020">
    <property type="term" value="C:membrane"/>
    <property type="evidence" value="ECO:0000250"/>
    <property type="project" value="UniProtKB"/>
</dbReference>
<dbReference type="GO" id="GO:0005634">
    <property type="term" value="C:nucleus"/>
    <property type="evidence" value="ECO:0007669"/>
    <property type="project" value="UniProtKB-SubCell"/>
</dbReference>
<dbReference type="GO" id="GO:0005944">
    <property type="term" value="C:phosphatidylinositol 3-kinase complex, class IB"/>
    <property type="evidence" value="ECO:0000250"/>
    <property type="project" value="UniProtKB"/>
</dbReference>
<dbReference type="GO" id="GO:0005886">
    <property type="term" value="C:plasma membrane"/>
    <property type="evidence" value="ECO:0007669"/>
    <property type="project" value="UniProtKB-SubCell"/>
</dbReference>
<dbReference type="GO" id="GO:0046935">
    <property type="term" value="F:1-phosphatidylinositol-3-kinase regulator activity"/>
    <property type="evidence" value="ECO:0007669"/>
    <property type="project" value="Ensembl"/>
</dbReference>
<dbReference type="GO" id="GO:0031683">
    <property type="term" value="F:G-protein beta/gamma-subunit complex binding"/>
    <property type="evidence" value="ECO:0000250"/>
    <property type="project" value="UniProtKB"/>
</dbReference>
<dbReference type="GO" id="GO:0007186">
    <property type="term" value="P:G protein-coupled receptor signaling pathway"/>
    <property type="evidence" value="ECO:0000250"/>
    <property type="project" value="UniProtKB"/>
</dbReference>
<dbReference type="GO" id="GO:0043491">
    <property type="term" value="P:phosphatidylinositol 3-kinase/protein kinase B signal transduction"/>
    <property type="evidence" value="ECO:0000250"/>
    <property type="project" value="UniProtKB"/>
</dbReference>
<dbReference type="GO" id="GO:0046488">
    <property type="term" value="P:phosphatidylinositol metabolic process"/>
    <property type="evidence" value="ECO:0007669"/>
    <property type="project" value="Ensembl"/>
</dbReference>
<dbReference type="GO" id="GO:0043406">
    <property type="term" value="P:positive regulation of MAP kinase activity"/>
    <property type="evidence" value="ECO:0000250"/>
    <property type="project" value="UniProtKB"/>
</dbReference>
<dbReference type="GO" id="GO:0051897">
    <property type="term" value="P:positive regulation of phosphatidylinositol 3-kinase/protein kinase B signal transduction"/>
    <property type="evidence" value="ECO:0000250"/>
    <property type="project" value="UniProtKB"/>
</dbReference>
<dbReference type="InterPro" id="IPR019522">
    <property type="entry name" value="PIK3R5/6"/>
</dbReference>
<dbReference type="PANTHER" id="PTHR15593">
    <property type="entry name" value="PHOSPHATIDYLINOSITOL 3-KINASE REGULATORY SUBUNIT"/>
    <property type="match status" value="1"/>
</dbReference>
<dbReference type="PANTHER" id="PTHR15593:SF2">
    <property type="entry name" value="PHOSPHOINOSITIDE 3-KINASE REGULATORY SUBUNIT 5"/>
    <property type="match status" value="1"/>
</dbReference>
<dbReference type="Pfam" id="PF10486">
    <property type="entry name" value="PI3K_1B_p101"/>
    <property type="match status" value="1"/>
</dbReference>
<evidence type="ECO:0000250" key="1"/>
<evidence type="ECO:0000250" key="2">
    <source>
        <dbReference type="UniProtKB" id="O02696"/>
    </source>
</evidence>
<evidence type="ECO:0000250" key="3">
    <source>
        <dbReference type="UniProtKB" id="Q8WYR1"/>
    </source>
</evidence>
<evidence type="ECO:0000256" key="4">
    <source>
        <dbReference type="SAM" id="MobiDB-lite"/>
    </source>
</evidence>
<evidence type="ECO:0000305" key="5"/>
<evidence type="ECO:0007744" key="6">
    <source>
    </source>
</evidence>
<reference key="1">
    <citation type="submission" date="2002-09" db="EMBL/GenBank/DDBJ databases">
        <title>Cloning of a murine ortholog of a PI3-kinase gamma regulatory protein.</title>
        <authorList>
            <person name="Procko E."/>
            <person name="McColl S.R."/>
        </authorList>
    </citation>
    <scope>NUCLEOTIDE SEQUENCE [MRNA]</scope>
    <source>
        <strain>BALB/cJ</strain>
    </source>
</reference>
<reference key="2">
    <citation type="journal article" date="2005" name="Science">
        <title>The transcriptional landscape of the mammalian genome.</title>
        <authorList>
            <person name="Carninci P."/>
            <person name="Kasukawa T."/>
            <person name="Katayama S."/>
            <person name="Gough J."/>
            <person name="Frith M.C."/>
            <person name="Maeda N."/>
            <person name="Oyama R."/>
            <person name="Ravasi T."/>
            <person name="Lenhard B."/>
            <person name="Wells C."/>
            <person name="Kodzius R."/>
            <person name="Shimokawa K."/>
            <person name="Bajic V.B."/>
            <person name="Brenner S.E."/>
            <person name="Batalov S."/>
            <person name="Forrest A.R."/>
            <person name="Zavolan M."/>
            <person name="Davis M.J."/>
            <person name="Wilming L.G."/>
            <person name="Aidinis V."/>
            <person name="Allen J.E."/>
            <person name="Ambesi-Impiombato A."/>
            <person name="Apweiler R."/>
            <person name="Aturaliya R.N."/>
            <person name="Bailey T.L."/>
            <person name="Bansal M."/>
            <person name="Baxter L."/>
            <person name="Beisel K.W."/>
            <person name="Bersano T."/>
            <person name="Bono H."/>
            <person name="Chalk A.M."/>
            <person name="Chiu K.P."/>
            <person name="Choudhary V."/>
            <person name="Christoffels A."/>
            <person name="Clutterbuck D.R."/>
            <person name="Crowe M.L."/>
            <person name="Dalla E."/>
            <person name="Dalrymple B.P."/>
            <person name="de Bono B."/>
            <person name="Della Gatta G."/>
            <person name="di Bernardo D."/>
            <person name="Down T."/>
            <person name="Engstrom P."/>
            <person name="Fagiolini M."/>
            <person name="Faulkner G."/>
            <person name="Fletcher C.F."/>
            <person name="Fukushima T."/>
            <person name="Furuno M."/>
            <person name="Futaki S."/>
            <person name="Gariboldi M."/>
            <person name="Georgii-Hemming P."/>
            <person name="Gingeras T.R."/>
            <person name="Gojobori T."/>
            <person name="Green R.E."/>
            <person name="Gustincich S."/>
            <person name="Harbers M."/>
            <person name="Hayashi Y."/>
            <person name="Hensch T.K."/>
            <person name="Hirokawa N."/>
            <person name="Hill D."/>
            <person name="Huminiecki L."/>
            <person name="Iacono M."/>
            <person name="Ikeo K."/>
            <person name="Iwama A."/>
            <person name="Ishikawa T."/>
            <person name="Jakt M."/>
            <person name="Kanapin A."/>
            <person name="Katoh M."/>
            <person name="Kawasawa Y."/>
            <person name="Kelso J."/>
            <person name="Kitamura H."/>
            <person name="Kitano H."/>
            <person name="Kollias G."/>
            <person name="Krishnan S.P."/>
            <person name="Kruger A."/>
            <person name="Kummerfeld S.K."/>
            <person name="Kurochkin I.V."/>
            <person name="Lareau L.F."/>
            <person name="Lazarevic D."/>
            <person name="Lipovich L."/>
            <person name="Liu J."/>
            <person name="Liuni S."/>
            <person name="McWilliam S."/>
            <person name="Madan Babu M."/>
            <person name="Madera M."/>
            <person name="Marchionni L."/>
            <person name="Matsuda H."/>
            <person name="Matsuzawa S."/>
            <person name="Miki H."/>
            <person name="Mignone F."/>
            <person name="Miyake S."/>
            <person name="Morris K."/>
            <person name="Mottagui-Tabar S."/>
            <person name="Mulder N."/>
            <person name="Nakano N."/>
            <person name="Nakauchi H."/>
            <person name="Ng P."/>
            <person name="Nilsson R."/>
            <person name="Nishiguchi S."/>
            <person name="Nishikawa S."/>
            <person name="Nori F."/>
            <person name="Ohara O."/>
            <person name="Okazaki Y."/>
            <person name="Orlando V."/>
            <person name="Pang K.C."/>
            <person name="Pavan W.J."/>
            <person name="Pavesi G."/>
            <person name="Pesole G."/>
            <person name="Petrovsky N."/>
            <person name="Piazza S."/>
            <person name="Reed J."/>
            <person name="Reid J.F."/>
            <person name="Ring B.Z."/>
            <person name="Ringwald M."/>
            <person name="Rost B."/>
            <person name="Ruan Y."/>
            <person name="Salzberg S.L."/>
            <person name="Sandelin A."/>
            <person name="Schneider C."/>
            <person name="Schoenbach C."/>
            <person name="Sekiguchi K."/>
            <person name="Semple C.A."/>
            <person name="Seno S."/>
            <person name="Sessa L."/>
            <person name="Sheng Y."/>
            <person name="Shibata Y."/>
            <person name="Shimada H."/>
            <person name="Shimada K."/>
            <person name="Silva D."/>
            <person name="Sinclair B."/>
            <person name="Sperling S."/>
            <person name="Stupka E."/>
            <person name="Sugiura K."/>
            <person name="Sultana R."/>
            <person name="Takenaka Y."/>
            <person name="Taki K."/>
            <person name="Tammoja K."/>
            <person name="Tan S.L."/>
            <person name="Tang S."/>
            <person name="Taylor M.S."/>
            <person name="Tegner J."/>
            <person name="Teichmann S.A."/>
            <person name="Ueda H.R."/>
            <person name="van Nimwegen E."/>
            <person name="Verardo R."/>
            <person name="Wei C.L."/>
            <person name="Yagi K."/>
            <person name="Yamanishi H."/>
            <person name="Zabarovsky E."/>
            <person name="Zhu S."/>
            <person name="Zimmer A."/>
            <person name="Hide W."/>
            <person name="Bult C."/>
            <person name="Grimmond S.M."/>
            <person name="Teasdale R.D."/>
            <person name="Liu E.T."/>
            <person name="Brusic V."/>
            <person name="Quackenbush J."/>
            <person name="Wahlestedt C."/>
            <person name="Mattick J.S."/>
            <person name="Hume D.A."/>
            <person name="Kai C."/>
            <person name="Sasaki D."/>
            <person name="Tomaru Y."/>
            <person name="Fukuda S."/>
            <person name="Kanamori-Katayama M."/>
            <person name="Suzuki M."/>
            <person name="Aoki J."/>
            <person name="Arakawa T."/>
            <person name="Iida J."/>
            <person name="Imamura K."/>
            <person name="Itoh M."/>
            <person name="Kato T."/>
            <person name="Kawaji H."/>
            <person name="Kawagashira N."/>
            <person name="Kawashima T."/>
            <person name="Kojima M."/>
            <person name="Kondo S."/>
            <person name="Konno H."/>
            <person name="Nakano K."/>
            <person name="Ninomiya N."/>
            <person name="Nishio T."/>
            <person name="Okada M."/>
            <person name="Plessy C."/>
            <person name="Shibata K."/>
            <person name="Shiraki T."/>
            <person name="Suzuki S."/>
            <person name="Tagami M."/>
            <person name="Waki K."/>
            <person name="Watahiki A."/>
            <person name="Okamura-Oho Y."/>
            <person name="Suzuki H."/>
            <person name="Kawai J."/>
            <person name="Hayashizaki Y."/>
        </authorList>
    </citation>
    <scope>NUCLEOTIDE SEQUENCE [LARGE SCALE MRNA]</scope>
    <source>
        <strain>C57BL/6J</strain>
        <tissue>Bone marrow</tissue>
        <tissue>Skin</tissue>
    </source>
</reference>
<reference key="3">
    <citation type="journal article" date="2009" name="PLoS Biol.">
        <title>Lineage-specific biology revealed by a finished genome assembly of the mouse.</title>
        <authorList>
            <person name="Church D.M."/>
            <person name="Goodstadt L."/>
            <person name="Hillier L.W."/>
            <person name="Zody M.C."/>
            <person name="Goldstein S."/>
            <person name="She X."/>
            <person name="Bult C.J."/>
            <person name="Agarwala R."/>
            <person name="Cherry J.L."/>
            <person name="DiCuccio M."/>
            <person name="Hlavina W."/>
            <person name="Kapustin Y."/>
            <person name="Meric P."/>
            <person name="Maglott D."/>
            <person name="Birtle Z."/>
            <person name="Marques A.C."/>
            <person name="Graves T."/>
            <person name="Zhou S."/>
            <person name="Teague B."/>
            <person name="Potamousis K."/>
            <person name="Churas C."/>
            <person name="Place M."/>
            <person name="Herschleb J."/>
            <person name="Runnheim R."/>
            <person name="Forrest D."/>
            <person name="Amos-Landgraf J."/>
            <person name="Schwartz D.C."/>
            <person name="Cheng Z."/>
            <person name="Lindblad-Toh K."/>
            <person name="Eichler E.E."/>
            <person name="Ponting C.P."/>
        </authorList>
    </citation>
    <scope>NUCLEOTIDE SEQUENCE [LARGE SCALE GENOMIC DNA]</scope>
    <source>
        <strain>C57BL/6J</strain>
    </source>
</reference>
<reference key="4">
    <citation type="journal article" date="2010" name="Cell">
        <title>A tissue-specific atlas of mouse protein phosphorylation and expression.</title>
        <authorList>
            <person name="Huttlin E.L."/>
            <person name="Jedrychowski M.P."/>
            <person name="Elias J.E."/>
            <person name="Goswami T."/>
            <person name="Rad R."/>
            <person name="Beausoleil S.A."/>
            <person name="Villen J."/>
            <person name="Haas W."/>
            <person name="Sowa M.E."/>
            <person name="Gygi S.P."/>
        </authorList>
    </citation>
    <scope>PHOSPHORYLATION [LARGE SCALE ANALYSIS] AT SER-451</scope>
    <scope>IDENTIFICATION BY MASS SPECTROMETRY [LARGE SCALE ANALYSIS]</scope>
    <source>
        <tissue>Lung</tissue>
    </source>
</reference>
<comment type="function">
    <text evidence="1">Regulatory subunit of the PI3K gamma complex. Required for recruitment of the catalytic subunit to the plasma membrane via interaction with beta-gamma G protein dimers. Required for G protein-mediated activation of PIK3CG (By similarity).</text>
</comment>
<comment type="activity regulation">
    <text evidence="1">Greatly activated by G gamma proteins.</text>
</comment>
<comment type="subunit">
    <text evidence="1">Heterodimer of a catalytic subunit (PIK3CG/p120) and a regulatory (PIK3R5a/p101) subunit. Interacts with beta-gamma G protein dimers (By similarity).</text>
</comment>
<comment type="subcellular location">
    <subcellularLocation>
        <location evidence="2">Nucleus</location>
    </subcellularLocation>
    <subcellularLocation>
        <location evidence="2">Cytoplasm</location>
    </subcellularLocation>
    <subcellularLocation>
        <location evidence="2">Cell membrane</location>
        <topology evidence="2">Peripheral membrane protein</topology>
    </subcellularLocation>
    <text evidence="2">Predominantly localized in the nucleus in absence of PIK3CG/p120. Colocalizes with PIK3CG/p120 in the cytoplasm. Translocated to the plasma membrane in a beta-gamma G protein-dependent manner.</text>
</comment>
<comment type="domain">
    <text evidence="1">The heterodimerization region allows the binding to the catalytic subunit.</text>
</comment>
<name>PI3R5_MOUSE</name>
<organism>
    <name type="scientific">Mus musculus</name>
    <name type="common">Mouse</name>
    <dbReference type="NCBI Taxonomy" id="10090"/>
    <lineage>
        <taxon>Eukaryota</taxon>
        <taxon>Metazoa</taxon>
        <taxon>Chordata</taxon>
        <taxon>Craniata</taxon>
        <taxon>Vertebrata</taxon>
        <taxon>Euteleostomi</taxon>
        <taxon>Mammalia</taxon>
        <taxon>Eutheria</taxon>
        <taxon>Euarchontoglires</taxon>
        <taxon>Glires</taxon>
        <taxon>Rodentia</taxon>
        <taxon>Myomorpha</taxon>
        <taxon>Muroidea</taxon>
        <taxon>Muridae</taxon>
        <taxon>Murinae</taxon>
        <taxon>Mus</taxon>
        <taxon>Mus</taxon>
    </lineage>
</organism>
<gene>
    <name type="primary">Pik3r5</name>
</gene>
<sequence>MQPAATTCTEDRIQHALERCLHGLSLGRRSAPWSAGLCLNCWSLQELVSRDPGHFLILLEQILQKTQEVQEKGTYDLLAPLALLFYSTVLCTPHFPPDSDLLLKAASTYHCFLTWPVPYCSICREMLTFIDAELKAPGISYQRLVRAEQGLPVRSHRSSTVTVLLLNPVEVQAEFLAVADKLSTPGQSPHGTYTTLLLHAFQATFGAHCDLPKLHRKLQSKTIEELEDIFTETTEAQELASGIGDVAEAREWLRTKLQAVGEKAGFPGILDTASPGKLHTIPIPVARCYTYSWNQDSFDILQEVLLKEQELLQPGILGDDEEEEEEDLEMDRHCAERDSLLSTSSLVSHDSTLLLTSSQASEPVLSRQMLTTFVSGLSDGMDSGYVEDSEENSEWPQKPGSQKRQGHRRPGQKFNRFYKLLKSTSQLVLRRDSRSLESSVDPTLPLRRAGSLCSPLDCPAQLPSRAQRSRSLPQAKLTTQLPRWLLAPPSHHQRRRPFLSGDEDPKASTLRVVVFGSDRISGKVARAYSKLRRLETSHPILTRFFKLQFFYVPVKRSHGTSPSACPSSLSQASPLPADSLKYPSPTDLGMAPWEDSTNDISHYLGMLDPWYERNVLGLMHLPPEVLCQQSLKADSRPLEGSATQLPILADMLLYYCRFAARPVLLQVYQTELTFVTGEKTTEIFIQSLELGHSATTRAIKASGRGRKRLGIDDDREAVPLTLQIIYSKGAISGRSRWSNLEKVCTSVNLSKACQKPEELDSSMEALTLTLTEVVKRQNPKSKKGFNQISTSYIKVDKVQIIGSSSCPFAVCLDQDERKILQSVVRCEVSPCYKPEKSSLPPERSFSQPAETGSDLCSLLCLPIMTFSGALP</sequence>
<proteinExistence type="evidence at protein level"/>
<accession>Q5SW28</accession>
<accession>Q3TU01</accession>
<accession>Q3UDZ2</accession>
<accession>Q8C215</accession>
<accession>Q8CGQ7</accession>
<feature type="chain" id="PRO_0000058422" description="Phosphoinositide 3-kinase regulatory subunit 5">
    <location>
        <begin position="1"/>
        <end position="871"/>
    </location>
</feature>
<feature type="region of interest" description="Heterodimerization" evidence="1">
    <location>
        <begin position="25"/>
        <end position="101"/>
    </location>
</feature>
<feature type="region of interest" description="Disordered" evidence="4">
    <location>
        <begin position="381"/>
        <end position="413"/>
    </location>
</feature>
<feature type="region of interest" description="Interaction with beta-gamma G protein dimers" evidence="1">
    <location>
        <begin position="646"/>
        <end position="746"/>
    </location>
</feature>
<feature type="modified residue" description="N-acetylmethionine" evidence="2">
    <location>
        <position position="1"/>
    </location>
</feature>
<feature type="modified residue" description="Phosphoserine" evidence="6">
    <location>
        <position position="451"/>
    </location>
</feature>
<feature type="modified residue" description="Phosphoserine" evidence="3">
    <location>
        <position position="500"/>
    </location>
</feature>
<feature type="sequence conflict" description="In Ref. 2; BAE29119." evidence="5" ref="2">
    <original>K</original>
    <variation>E</variation>
    <location>
        <position position="65"/>
    </location>
</feature>
<feature type="sequence conflict" description="In Ref. 2; BAC40901." evidence="5" ref="2">
    <original>I</original>
    <variation>T</variation>
    <location>
        <position position="269"/>
    </location>
</feature>
<feature type="sequence conflict" description="In Ref. 1; AAN84787." evidence="5" ref="1">
    <original>M</original>
    <variation>V</variation>
    <location>
        <position position="369"/>
    </location>
</feature>
<feature type="sequence conflict" description="In Ref. 1; AAN84787." evidence="5" ref="1">
    <original>A</original>
    <variation>V</variation>
    <location>
        <position position="642"/>
    </location>
</feature>
<feature type="sequence conflict" description="In Ref. 1; AAN84787." evidence="5" ref="1">
    <original>I</original>
    <variation>T</variation>
    <location>
        <position position="647"/>
    </location>
</feature>
<feature type="sequence conflict" description="In Ref. 1; AAN84787." evidence="5" ref="1">
    <original>M</original>
    <variation>V</variation>
    <location>
        <position position="651"/>
    </location>
</feature>
<feature type="sequence conflict" description="In Ref. 2; BAE29119." evidence="5" ref="2">
    <original>D</original>
    <variation>G</variation>
    <location>
        <position position="796"/>
    </location>
</feature>
<keyword id="KW-0007">Acetylation</keyword>
<keyword id="KW-1003">Cell membrane</keyword>
<keyword id="KW-0963">Cytoplasm</keyword>
<keyword id="KW-0472">Membrane</keyword>
<keyword id="KW-0539">Nucleus</keyword>
<keyword id="KW-0597">Phosphoprotein</keyword>
<keyword id="KW-1185">Reference proteome</keyword>